<dbReference type="EMBL" id="LT708304">
    <property type="protein sequence ID" value="SIT99507.1"/>
    <property type="molecule type" value="Genomic_DNA"/>
</dbReference>
<dbReference type="RefSeq" id="NP_854566.1">
    <property type="nucleotide sequence ID" value="NC_002945.3"/>
</dbReference>
<dbReference type="RefSeq" id="WP_003404627.1">
    <property type="nucleotide sequence ID" value="NC_002945.4"/>
</dbReference>
<dbReference type="KEGG" id="mbo:BQ2027_MB0909"/>
<dbReference type="PATRIC" id="fig|233413.5.peg.989"/>
<dbReference type="Proteomes" id="UP000001419">
    <property type="component" value="Chromosome"/>
</dbReference>
<dbReference type="GO" id="GO:0005886">
    <property type="term" value="C:plasma membrane"/>
    <property type="evidence" value="ECO:0007669"/>
    <property type="project" value="UniProtKB-SubCell"/>
</dbReference>
<dbReference type="GO" id="GO:0016491">
    <property type="term" value="F:oxidoreductase activity"/>
    <property type="evidence" value="ECO:0007669"/>
    <property type="project" value="InterPro"/>
</dbReference>
<dbReference type="Gene3D" id="1.10.620.20">
    <property type="entry name" value="Ribonucleotide Reductase, subunit A"/>
    <property type="match status" value="1"/>
</dbReference>
<dbReference type="InterPro" id="IPR025859">
    <property type="entry name" value="AurF/CmlI"/>
</dbReference>
<dbReference type="InterPro" id="IPR009078">
    <property type="entry name" value="Ferritin-like_SF"/>
</dbReference>
<dbReference type="InterPro" id="IPR012348">
    <property type="entry name" value="RNR-like"/>
</dbReference>
<dbReference type="Pfam" id="PF11583">
    <property type="entry name" value="AurF"/>
    <property type="match status" value="1"/>
</dbReference>
<dbReference type="SUPFAM" id="SSF47240">
    <property type="entry name" value="Ferritin-like"/>
    <property type="match status" value="1"/>
</dbReference>
<comment type="subcellular location">
    <subcellularLocation>
        <location evidence="2">Cell membrane</location>
        <topology evidence="2">Multi-pass membrane protein</topology>
    </subcellularLocation>
</comment>
<sequence length="340" mass="39798">MDRTRIVRRWRRNMDVADDAEYVEMLATLSEGSVRRNFNPYTDIDWESPEFAVTDNDPRWILPATDPLGRHPWYQAQSRERQIEIGMWRQANVAKVGLHFESILIRGLMNYTFWMPNGSPEYRYCLHESVEECNHTMMFQEMVNRVGADVPGLPRRLRWVSPLVPLVAGPLPVAFFIGVLAGEEPIDHTQKNVLREGKSLHPIMERVMSIHVAEEARHISFAHEYLRKRLPRLTRMQRFWISLYFPLTMRSLCNAIVVPPKAFWEEFDIPREVKKELFFGSPESRKWLCDMFADARMLAHDTGLMNPIARLVWRLCKIDGKPSRYRSEPQRQHLAAAPAA</sequence>
<reference key="1">
    <citation type="journal article" date="2003" name="Proc. Natl. Acad. Sci. U.S.A.">
        <title>The complete genome sequence of Mycobacterium bovis.</title>
        <authorList>
            <person name="Garnier T."/>
            <person name="Eiglmeier K."/>
            <person name="Camus J.-C."/>
            <person name="Medina N."/>
            <person name="Mansoor H."/>
            <person name="Pryor M."/>
            <person name="Duthoy S."/>
            <person name="Grondin S."/>
            <person name="Lacroix C."/>
            <person name="Monsempe C."/>
            <person name="Simon S."/>
            <person name="Harris B."/>
            <person name="Atkin R."/>
            <person name="Doggett J."/>
            <person name="Mayes R."/>
            <person name="Keating L."/>
            <person name="Wheeler P.R."/>
            <person name="Parkhill J."/>
            <person name="Barrell B.G."/>
            <person name="Cole S.T."/>
            <person name="Gordon S.V."/>
            <person name="Hewinson R.G."/>
        </authorList>
    </citation>
    <scope>NUCLEOTIDE SEQUENCE [LARGE SCALE GENOMIC DNA]</scope>
    <source>
        <strain>ATCC BAA-935 / AF2122/97</strain>
    </source>
</reference>
<reference key="2">
    <citation type="journal article" date="2017" name="Genome Announc.">
        <title>Updated reference genome sequence and annotation of Mycobacterium bovis AF2122/97.</title>
        <authorList>
            <person name="Malone K.M."/>
            <person name="Farrell D."/>
            <person name="Stuber T.P."/>
            <person name="Schubert O.T."/>
            <person name="Aebersold R."/>
            <person name="Robbe-Austerman S."/>
            <person name="Gordon S.V."/>
        </authorList>
    </citation>
    <scope>NUCLEOTIDE SEQUENCE [LARGE SCALE GENOMIC DNA]</scope>
    <scope>GENOME REANNOTATION</scope>
    <source>
        <strain>ATCC BAA-935 / AF2122/97</strain>
    </source>
</reference>
<feature type="chain" id="PRO_0000103728" description="Uncharacterized protein Mb0909">
    <location>
        <begin position="1"/>
        <end position="340"/>
    </location>
</feature>
<feature type="transmembrane region" description="Helical" evidence="1">
    <location>
        <begin position="162"/>
        <end position="182"/>
    </location>
</feature>
<feature type="transmembrane region" description="Helical" evidence="1">
    <location>
        <begin position="239"/>
        <end position="259"/>
    </location>
</feature>
<organism>
    <name type="scientific">Mycobacterium bovis (strain ATCC BAA-935 / AF2122/97)</name>
    <dbReference type="NCBI Taxonomy" id="233413"/>
    <lineage>
        <taxon>Bacteria</taxon>
        <taxon>Bacillati</taxon>
        <taxon>Actinomycetota</taxon>
        <taxon>Actinomycetes</taxon>
        <taxon>Mycobacteriales</taxon>
        <taxon>Mycobacteriaceae</taxon>
        <taxon>Mycobacterium</taxon>
        <taxon>Mycobacterium tuberculosis complex</taxon>
    </lineage>
</organism>
<gene>
    <name type="ordered locus">BQ2027_MB0909</name>
</gene>
<accession>P0A5D6</accession>
<accession>A0A1R3XWQ9</accession>
<accession>Q10546</accession>
<accession>X2BGB3</accession>
<evidence type="ECO:0000255" key="1"/>
<evidence type="ECO:0000305" key="2"/>
<proteinExistence type="predicted"/>
<protein>
    <recommendedName>
        <fullName>Uncharacterized protein Mb0909</fullName>
    </recommendedName>
</protein>
<name>Y909_MYCBO</name>
<keyword id="KW-1003">Cell membrane</keyword>
<keyword id="KW-0472">Membrane</keyword>
<keyword id="KW-1185">Reference proteome</keyword>
<keyword id="KW-0812">Transmembrane</keyword>
<keyword id="KW-1133">Transmembrane helix</keyword>